<gene>
    <name evidence="1" type="primary">rplO</name>
    <name type="ordered locus">Shewmr4_0218</name>
</gene>
<evidence type="ECO:0000255" key="1">
    <source>
        <dbReference type="HAMAP-Rule" id="MF_01341"/>
    </source>
</evidence>
<evidence type="ECO:0000256" key="2">
    <source>
        <dbReference type="SAM" id="MobiDB-lite"/>
    </source>
</evidence>
<evidence type="ECO:0000305" key="3"/>
<dbReference type="EMBL" id="CP000446">
    <property type="protein sequence ID" value="ABI37299.1"/>
    <property type="molecule type" value="Genomic_DNA"/>
</dbReference>
<dbReference type="RefSeq" id="WP_011070628.1">
    <property type="nucleotide sequence ID" value="NC_008321.1"/>
</dbReference>
<dbReference type="SMR" id="Q0HNR8"/>
<dbReference type="GeneID" id="94726205"/>
<dbReference type="KEGG" id="she:Shewmr4_0218"/>
<dbReference type="HOGENOM" id="CLU_055188_4_2_6"/>
<dbReference type="GO" id="GO:0022625">
    <property type="term" value="C:cytosolic large ribosomal subunit"/>
    <property type="evidence" value="ECO:0007669"/>
    <property type="project" value="TreeGrafter"/>
</dbReference>
<dbReference type="GO" id="GO:0019843">
    <property type="term" value="F:rRNA binding"/>
    <property type="evidence" value="ECO:0007669"/>
    <property type="project" value="UniProtKB-UniRule"/>
</dbReference>
<dbReference type="GO" id="GO:0003735">
    <property type="term" value="F:structural constituent of ribosome"/>
    <property type="evidence" value="ECO:0007669"/>
    <property type="project" value="InterPro"/>
</dbReference>
<dbReference type="GO" id="GO:0006412">
    <property type="term" value="P:translation"/>
    <property type="evidence" value="ECO:0007669"/>
    <property type="project" value="UniProtKB-UniRule"/>
</dbReference>
<dbReference type="FunFam" id="3.100.10.10:FF:000003">
    <property type="entry name" value="50S ribosomal protein L15"/>
    <property type="match status" value="1"/>
</dbReference>
<dbReference type="Gene3D" id="3.100.10.10">
    <property type="match status" value="1"/>
</dbReference>
<dbReference type="HAMAP" id="MF_01341">
    <property type="entry name" value="Ribosomal_uL15"/>
    <property type="match status" value="1"/>
</dbReference>
<dbReference type="InterPro" id="IPR030878">
    <property type="entry name" value="Ribosomal_uL15"/>
</dbReference>
<dbReference type="InterPro" id="IPR021131">
    <property type="entry name" value="Ribosomal_uL15/eL18"/>
</dbReference>
<dbReference type="InterPro" id="IPR036227">
    <property type="entry name" value="Ribosomal_uL15/eL18_sf"/>
</dbReference>
<dbReference type="InterPro" id="IPR005749">
    <property type="entry name" value="Ribosomal_uL15_bac-type"/>
</dbReference>
<dbReference type="InterPro" id="IPR001196">
    <property type="entry name" value="Ribosomal_uL15_CS"/>
</dbReference>
<dbReference type="NCBIfam" id="TIGR01071">
    <property type="entry name" value="rplO_bact"/>
    <property type="match status" value="1"/>
</dbReference>
<dbReference type="PANTHER" id="PTHR12934">
    <property type="entry name" value="50S RIBOSOMAL PROTEIN L15"/>
    <property type="match status" value="1"/>
</dbReference>
<dbReference type="PANTHER" id="PTHR12934:SF11">
    <property type="entry name" value="LARGE RIBOSOMAL SUBUNIT PROTEIN UL15M"/>
    <property type="match status" value="1"/>
</dbReference>
<dbReference type="Pfam" id="PF00828">
    <property type="entry name" value="Ribosomal_L27A"/>
    <property type="match status" value="1"/>
</dbReference>
<dbReference type="SUPFAM" id="SSF52080">
    <property type="entry name" value="Ribosomal proteins L15p and L18e"/>
    <property type="match status" value="1"/>
</dbReference>
<dbReference type="PROSITE" id="PS00475">
    <property type="entry name" value="RIBOSOMAL_L15"/>
    <property type="match status" value="1"/>
</dbReference>
<accession>Q0HNR8</accession>
<name>RL15_SHESM</name>
<protein>
    <recommendedName>
        <fullName evidence="1">Large ribosomal subunit protein uL15</fullName>
    </recommendedName>
    <alternativeName>
        <fullName evidence="3">50S ribosomal protein L15</fullName>
    </alternativeName>
</protein>
<organism>
    <name type="scientific">Shewanella sp. (strain MR-4)</name>
    <dbReference type="NCBI Taxonomy" id="60480"/>
    <lineage>
        <taxon>Bacteria</taxon>
        <taxon>Pseudomonadati</taxon>
        <taxon>Pseudomonadota</taxon>
        <taxon>Gammaproteobacteria</taxon>
        <taxon>Alteromonadales</taxon>
        <taxon>Shewanellaceae</taxon>
        <taxon>Shewanella</taxon>
    </lineage>
</organism>
<feature type="chain" id="PRO_1000054542" description="Large ribosomal subunit protein uL15">
    <location>
        <begin position="1"/>
        <end position="144"/>
    </location>
</feature>
<feature type="region of interest" description="Disordered" evidence="2">
    <location>
        <begin position="1"/>
        <end position="54"/>
    </location>
</feature>
<feature type="compositionally biased region" description="Gly residues" evidence="2">
    <location>
        <begin position="21"/>
        <end position="31"/>
    </location>
</feature>
<feature type="compositionally biased region" description="Gly residues" evidence="2">
    <location>
        <begin position="42"/>
        <end position="52"/>
    </location>
</feature>
<proteinExistence type="inferred from homology"/>
<reference key="1">
    <citation type="submission" date="2006-08" db="EMBL/GenBank/DDBJ databases">
        <title>Complete sequence of Shewanella sp. MR-4.</title>
        <authorList>
            <consortium name="US DOE Joint Genome Institute"/>
            <person name="Copeland A."/>
            <person name="Lucas S."/>
            <person name="Lapidus A."/>
            <person name="Barry K."/>
            <person name="Detter J.C."/>
            <person name="Glavina del Rio T."/>
            <person name="Hammon N."/>
            <person name="Israni S."/>
            <person name="Dalin E."/>
            <person name="Tice H."/>
            <person name="Pitluck S."/>
            <person name="Kiss H."/>
            <person name="Brettin T."/>
            <person name="Bruce D."/>
            <person name="Han C."/>
            <person name="Tapia R."/>
            <person name="Gilna P."/>
            <person name="Schmutz J."/>
            <person name="Larimer F."/>
            <person name="Land M."/>
            <person name="Hauser L."/>
            <person name="Kyrpides N."/>
            <person name="Mikhailova N."/>
            <person name="Nealson K."/>
            <person name="Konstantinidis K."/>
            <person name="Klappenbach J."/>
            <person name="Tiedje J."/>
            <person name="Richardson P."/>
        </authorList>
    </citation>
    <scope>NUCLEOTIDE SEQUENCE [LARGE SCALE GENOMIC DNA]</scope>
    <source>
        <strain>MR-4</strain>
    </source>
</reference>
<sequence length="144" mass="15081">MRLNTLSPAAGAKHAPKRVGRGMGSGLGKTAGRGHKGQKSRSGGGVRPGFEGGQMPLKIRLPKFGFTSRRAMVTAEVRVLELAKVNGDVIDLNALKDANVITRNIQFAKIVLSGTIERPVTVKGLKVTKGARAAIEAAGGKIEE</sequence>
<comment type="function">
    <text evidence="1">Binds to the 23S rRNA.</text>
</comment>
<comment type="subunit">
    <text evidence="1">Part of the 50S ribosomal subunit.</text>
</comment>
<comment type="similarity">
    <text evidence="1">Belongs to the universal ribosomal protein uL15 family.</text>
</comment>
<keyword id="KW-0687">Ribonucleoprotein</keyword>
<keyword id="KW-0689">Ribosomal protein</keyword>
<keyword id="KW-0694">RNA-binding</keyword>
<keyword id="KW-0699">rRNA-binding</keyword>